<proteinExistence type="inferred from homology"/>
<reference key="1">
    <citation type="journal article" date="2007" name="PLoS Genet.">
        <title>Patterns and implications of gene gain and loss in the evolution of Prochlorococcus.</title>
        <authorList>
            <person name="Kettler G.C."/>
            <person name="Martiny A.C."/>
            <person name="Huang K."/>
            <person name="Zucker J."/>
            <person name="Coleman M.L."/>
            <person name="Rodrigue S."/>
            <person name="Chen F."/>
            <person name="Lapidus A."/>
            <person name="Ferriera S."/>
            <person name="Johnson J."/>
            <person name="Steglich C."/>
            <person name="Church G.M."/>
            <person name="Richardson P."/>
            <person name="Chisholm S.W."/>
        </authorList>
    </citation>
    <scope>NUCLEOTIDE SEQUENCE [LARGE SCALE GENOMIC DNA]</scope>
    <source>
        <strain>NATL1A</strain>
    </source>
</reference>
<accession>A2C4N1</accession>
<gene>
    <name evidence="1" type="primary">rpoC1</name>
    <name type="ordered locus">NATL1_18851</name>
</gene>
<sequence>MTNSNLRTENHFDYVKIKLASPERVMEWGQRTLPNGQVVGEVTKPETINYRTLKPEMDGLFCEKIFGPSKDWECHCGKYKRVRHRGIVCERCGVEVTESRVRRHRMGFIKLAAPVSHVWYLKGIPSYVAILLDMPLRDVEQIVYFNCYVVLDIGDSKDLKYKQLLTEDEWLEIEDEIYAEDSTIENEPIVGIGAEALKQLLEDLNLKEVAEQLREDIATSKGQKRAKLIKRLRVIDNFIATSASPEWMVLDAIPVIPPDLRPMVQLDGGRFATSDLNDLYRRVINRNNRLARLQEILAPEIIVRNEKRMLQEAVDALIDNGRRGRTVVGANNRPLKSLSDIIEGKQGRFRQNLLGKRVDYSGRSVIVVGPKLKMHQCGLPKEMAIELFQPFVIHRLIRQNIVNNIKAAKKLIQKADDEVMQVLQEVIEGHPILLNRAPTLHRLGIQAFEPKLVAGRAIQLHPLVCPAFNADFDGDQMAVHVPLAIEAQTEARMLMLASNNILSPATGDPIVTPSQDMVLGSYYLTAIQPQAKQPKFGDYSDTYASLEDVLQALEDKRIDLHDWVWVRFSGEIEDDDELQKPLKSETLKDGTRIEEWTYRRDRLDEDGSLISRYILTTVGRVVMNHTIIDAVAATS</sequence>
<name>RPOC1_PROM1</name>
<keyword id="KW-0240">DNA-directed RNA polymerase</keyword>
<keyword id="KW-0460">Magnesium</keyword>
<keyword id="KW-0479">Metal-binding</keyword>
<keyword id="KW-0548">Nucleotidyltransferase</keyword>
<keyword id="KW-0804">Transcription</keyword>
<keyword id="KW-0808">Transferase</keyword>
<keyword id="KW-0862">Zinc</keyword>
<dbReference type="EC" id="2.7.7.6" evidence="1"/>
<dbReference type="EMBL" id="CP000553">
    <property type="protein sequence ID" value="ABM76441.1"/>
    <property type="molecule type" value="Genomic_DNA"/>
</dbReference>
<dbReference type="RefSeq" id="WP_011824420.1">
    <property type="nucleotide sequence ID" value="NC_008819.1"/>
</dbReference>
<dbReference type="SMR" id="A2C4N1"/>
<dbReference type="KEGG" id="pme:NATL1_18851"/>
<dbReference type="eggNOG" id="COG0086">
    <property type="taxonomic scope" value="Bacteria"/>
</dbReference>
<dbReference type="HOGENOM" id="CLU_030022_2_0_3"/>
<dbReference type="Proteomes" id="UP000002592">
    <property type="component" value="Chromosome"/>
</dbReference>
<dbReference type="GO" id="GO:0000428">
    <property type="term" value="C:DNA-directed RNA polymerase complex"/>
    <property type="evidence" value="ECO:0007669"/>
    <property type="project" value="UniProtKB-KW"/>
</dbReference>
<dbReference type="GO" id="GO:0003677">
    <property type="term" value="F:DNA binding"/>
    <property type="evidence" value="ECO:0007669"/>
    <property type="project" value="UniProtKB-UniRule"/>
</dbReference>
<dbReference type="GO" id="GO:0003899">
    <property type="term" value="F:DNA-directed RNA polymerase activity"/>
    <property type="evidence" value="ECO:0007669"/>
    <property type="project" value="UniProtKB-UniRule"/>
</dbReference>
<dbReference type="GO" id="GO:0000287">
    <property type="term" value="F:magnesium ion binding"/>
    <property type="evidence" value="ECO:0007669"/>
    <property type="project" value="UniProtKB-UniRule"/>
</dbReference>
<dbReference type="GO" id="GO:0008270">
    <property type="term" value="F:zinc ion binding"/>
    <property type="evidence" value="ECO:0007669"/>
    <property type="project" value="UniProtKB-UniRule"/>
</dbReference>
<dbReference type="GO" id="GO:0006351">
    <property type="term" value="P:DNA-templated transcription"/>
    <property type="evidence" value="ECO:0007669"/>
    <property type="project" value="UniProtKB-UniRule"/>
</dbReference>
<dbReference type="Gene3D" id="1.10.40.90">
    <property type="match status" value="1"/>
</dbReference>
<dbReference type="Gene3D" id="2.40.40.20">
    <property type="match status" value="1"/>
</dbReference>
<dbReference type="Gene3D" id="4.10.860.120">
    <property type="entry name" value="RNA polymerase II, clamp domain"/>
    <property type="match status" value="1"/>
</dbReference>
<dbReference type="Gene3D" id="1.10.274.100">
    <property type="entry name" value="RNA polymerase Rpb1, domain 3"/>
    <property type="match status" value="1"/>
</dbReference>
<dbReference type="HAMAP" id="MF_01323">
    <property type="entry name" value="RNApol_bact_RpoC1"/>
    <property type="match status" value="1"/>
</dbReference>
<dbReference type="InterPro" id="IPR012755">
    <property type="entry name" value="DNA-dir_RpoC1_gamma"/>
</dbReference>
<dbReference type="InterPro" id="IPR045867">
    <property type="entry name" value="DNA-dir_RpoC_beta_prime"/>
</dbReference>
<dbReference type="InterPro" id="IPR000722">
    <property type="entry name" value="RNA_pol_asu"/>
</dbReference>
<dbReference type="InterPro" id="IPR006592">
    <property type="entry name" value="RNA_pol_N"/>
</dbReference>
<dbReference type="InterPro" id="IPR007080">
    <property type="entry name" value="RNA_pol_Rpb1_1"/>
</dbReference>
<dbReference type="InterPro" id="IPR007066">
    <property type="entry name" value="RNA_pol_Rpb1_3"/>
</dbReference>
<dbReference type="InterPro" id="IPR042102">
    <property type="entry name" value="RNA_pol_Rpb1_3_sf"/>
</dbReference>
<dbReference type="InterPro" id="IPR044893">
    <property type="entry name" value="RNA_pol_Rpb1_clamp_domain"/>
</dbReference>
<dbReference type="InterPro" id="IPR034678">
    <property type="entry name" value="RNApol_RpoC1"/>
</dbReference>
<dbReference type="NCBIfam" id="NF002729">
    <property type="entry name" value="PRK02625.1"/>
    <property type="match status" value="1"/>
</dbReference>
<dbReference type="NCBIfam" id="TIGR02387">
    <property type="entry name" value="rpoC1_cyan"/>
    <property type="match status" value="1"/>
</dbReference>
<dbReference type="PANTHER" id="PTHR19376">
    <property type="entry name" value="DNA-DIRECTED RNA POLYMERASE"/>
    <property type="match status" value="1"/>
</dbReference>
<dbReference type="PANTHER" id="PTHR19376:SF54">
    <property type="entry name" value="DNA-DIRECTED RNA POLYMERASE SUBUNIT BETA"/>
    <property type="match status" value="1"/>
</dbReference>
<dbReference type="Pfam" id="PF04997">
    <property type="entry name" value="RNA_pol_Rpb1_1"/>
    <property type="match status" value="1"/>
</dbReference>
<dbReference type="Pfam" id="PF00623">
    <property type="entry name" value="RNA_pol_Rpb1_2"/>
    <property type="match status" value="1"/>
</dbReference>
<dbReference type="Pfam" id="PF04983">
    <property type="entry name" value="RNA_pol_Rpb1_3"/>
    <property type="match status" value="1"/>
</dbReference>
<dbReference type="SMART" id="SM00663">
    <property type="entry name" value="RPOLA_N"/>
    <property type="match status" value="1"/>
</dbReference>
<dbReference type="SUPFAM" id="SSF64484">
    <property type="entry name" value="beta and beta-prime subunits of DNA dependent RNA-polymerase"/>
    <property type="match status" value="1"/>
</dbReference>
<protein>
    <recommendedName>
        <fullName evidence="1">DNA-directed RNA polymerase subunit gamma</fullName>
        <shortName evidence="1">RNAP subunit gamma</shortName>
        <ecNumber evidence="1">2.7.7.6</ecNumber>
    </recommendedName>
    <alternativeName>
        <fullName evidence="1">RNA polymerase subunit gamma</fullName>
    </alternativeName>
    <alternativeName>
        <fullName evidence="1">Transcriptase subunit gamma</fullName>
    </alternativeName>
</protein>
<evidence type="ECO:0000255" key="1">
    <source>
        <dbReference type="HAMAP-Rule" id="MF_01323"/>
    </source>
</evidence>
<organism>
    <name type="scientific">Prochlorococcus marinus (strain NATL1A)</name>
    <dbReference type="NCBI Taxonomy" id="167555"/>
    <lineage>
        <taxon>Bacteria</taxon>
        <taxon>Bacillati</taxon>
        <taxon>Cyanobacteriota</taxon>
        <taxon>Cyanophyceae</taxon>
        <taxon>Synechococcales</taxon>
        <taxon>Prochlorococcaceae</taxon>
        <taxon>Prochlorococcus</taxon>
    </lineage>
</organism>
<comment type="function">
    <text evidence="1">DNA-dependent RNA polymerase catalyzes the transcription of DNA into RNA using the four ribonucleoside triphosphates as substrates.</text>
</comment>
<comment type="catalytic activity">
    <reaction evidence="1">
        <text>RNA(n) + a ribonucleoside 5'-triphosphate = RNA(n+1) + diphosphate</text>
        <dbReference type="Rhea" id="RHEA:21248"/>
        <dbReference type="Rhea" id="RHEA-COMP:14527"/>
        <dbReference type="Rhea" id="RHEA-COMP:17342"/>
        <dbReference type="ChEBI" id="CHEBI:33019"/>
        <dbReference type="ChEBI" id="CHEBI:61557"/>
        <dbReference type="ChEBI" id="CHEBI:140395"/>
        <dbReference type="EC" id="2.7.7.6"/>
    </reaction>
</comment>
<comment type="cofactor">
    <cofactor evidence="1">
        <name>Mg(2+)</name>
        <dbReference type="ChEBI" id="CHEBI:18420"/>
    </cofactor>
    <text evidence="1">Binds 1 Mg(2+) ion per subunit.</text>
</comment>
<comment type="cofactor">
    <cofactor evidence="1">
        <name>Zn(2+)</name>
        <dbReference type="ChEBI" id="CHEBI:29105"/>
    </cofactor>
    <text evidence="1">Binds 1 Zn(2+) ion per subunit.</text>
</comment>
<comment type="subunit">
    <text evidence="1">In cyanobacteria the RNAP catalytic core is composed of 2 alpha, 1 beta, 1 beta', 1 gamma and 1 omega subunit. When a sigma factor is associated with the core the holoenzyme is formed, which can initiate transcription.</text>
</comment>
<comment type="similarity">
    <text evidence="1">Belongs to the RNA polymerase beta' chain family. RpoC1 subfamily.</text>
</comment>
<feature type="chain" id="PRO_1000051990" description="DNA-directed RNA polymerase subunit gamma">
    <location>
        <begin position="1"/>
        <end position="635"/>
    </location>
</feature>
<feature type="binding site" evidence="1">
    <location>
        <position position="74"/>
    </location>
    <ligand>
        <name>Zn(2+)</name>
        <dbReference type="ChEBI" id="CHEBI:29105"/>
    </ligand>
</feature>
<feature type="binding site" evidence="1">
    <location>
        <position position="76"/>
    </location>
    <ligand>
        <name>Zn(2+)</name>
        <dbReference type="ChEBI" id="CHEBI:29105"/>
    </ligand>
</feature>
<feature type="binding site" evidence="1">
    <location>
        <position position="89"/>
    </location>
    <ligand>
        <name>Zn(2+)</name>
        <dbReference type="ChEBI" id="CHEBI:29105"/>
    </ligand>
</feature>
<feature type="binding site" evidence="1">
    <location>
        <position position="92"/>
    </location>
    <ligand>
        <name>Zn(2+)</name>
        <dbReference type="ChEBI" id="CHEBI:29105"/>
    </ligand>
</feature>
<feature type="binding site" evidence="1">
    <location>
        <position position="471"/>
    </location>
    <ligand>
        <name>Mg(2+)</name>
        <dbReference type="ChEBI" id="CHEBI:18420"/>
    </ligand>
</feature>
<feature type="binding site" evidence="1">
    <location>
        <position position="473"/>
    </location>
    <ligand>
        <name>Mg(2+)</name>
        <dbReference type="ChEBI" id="CHEBI:18420"/>
    </ligand>
</feature>
<feature type="binding site" evidence="1">
    <location>
        <position position="475"/>
    </location>
    <ligand>
        <name>Mg(2+)</name>
        <dbReference type="ChEBI" id="CHEBI:18420"/>
    </ligand>
</feature>